<sequence length="482" mass="52882">MSPTTAANQAKKLIKVPEMRRIKHIHFVGIGGAGMCGIAEVLANQGYKISGSDIKASKTTQQLEENGIKVYIGHEAENIKNANVLVVSTAIDPENPEVKAAIEQRIPIVRRAEMLGELMRYRHGIAVAGTHGKTTTTSLLTTMLAEENLDPTYVIGGLLNSTGVNAALGESRFIVAEADESDASFLYLQPMAAIVTNIDADHMDTYEGSFDKLKDTFVQFLHNLPFYGLAVVCGDDANIREILPRVGRPVITYGFNEDNDIRAIDVEQDGMRSHFTVLRKGREPLRLTINQPGLHNVLNALAAIGVATDEGVSDEAISRALKGFSGVGRRFQVQGEFELGEGNVKLVDDYGHHPKEVEATIKAARQSHPDRRLVMLFQPHRYSRTRDCFDDFIEVLSQVDQLLLLEVYPAGEKPIVGADSRTLARSIRLRGQVEPILIDPVEGNLQNIMQNVLQPNDLLLTQGAGNVGAISVELAQHHLYVK</sequence>
<proteinExistence type="evidence at protein level"/>
<organism>
    <name type="scientific">Acinetobacter baumannii (strain AB307-0294)</name>
    <dbReference type="NCBI Taxonomy" id="557600"/>
    <lineage>
        <taxon>Bacteria</taxon>
        <taxon>Pseudomonadati</taxon>
        <taxon>Pseudomonadota</taxon>
        <taxon>Gammaproteobacteria</taxon>
        <taxon>Moraxellales</taxon>
        <taxon>Moraxellaceae</taxon>
        <taxon>Acinetobacter</taxon>
        <taxon>Acinetobacter calcoaceticus/baumannii complex</taxon>
    </lineage>
</organism>
<keyword id="KW-0002">3D-structure</keyword>
<keyword id="KW-0067">ATP-binding</keyword>
<keyword id="KW-0131">Cell cycle</keyword>
<keyword id="KW-0132">Cell division</keyword>
<keyword id="KW-0133">Cell shape</keyword>
<keyword id="KW-0961">Cell wall biogenesis/degradation</keyword>
<keyword id="KW-0963">Cytoplasm</keyword>
<keyword id="KW-0436">Ligase</keyword>
<keyword id="KW-0547">Nucleotide-binding</keyword>
<keyword id="KW-0573">Peptidoglycan synthesis</keyword>
<gene>
    <name evidence="1" type="primary">murC</name>
    <name type="ordered locus">ABBFA_000146</name>
</gene>
<feature type="chain" id="PRO_1000116611" description="UDP-N-acetylmuramate--L-alanine ligase">
    <location>
        <begin position="1"/>
        <end position="482"/>
    </location>
</feature>
<feature type="binding site" evidence="1">
    <location>
        <begin position="129"/>
        <end position="135"/>
    </location>
    <ligand>
        <name>ATP</name>
        <dbReference type="ChEBI" id="CHEBI:30616"/>
    </ligand>
</feature>
<feature type="strand" evidence="2">
    <location>
        <begin position="24"/>
        <end position="28"/>
    </location>
</feature>
<feature type="turn" evidence="2">
    <location>
        <begin position="29"/>
        <end position="31"/>
    </location>
</feature>
<feature type="helix" evidence="2">
    <location>
        <begin position="35"/>
        <end position="44"/>
    </location>
</feature>
<feature type="strand" evidence="2">
    <location>
        <begin position="48"/>
        <end position="55"/>
    </location>
</feature>
<feature type="helix" evidence="2">
    <location>
        <begin position="58"/>
        <end position="65"/>
    </location>
</feature>
<feature type="strand" evidence="2">
    <location>
        <begin position="69"/>
        <end position="73"/>
    </location>
</feature>
<feature type="helix" evidence="2">
    <location>
        <begin position="76"/>
        <end position="79"/>
    </location>
</feature>
<feature type="strand" evidence="2">
    <location>
        <begin position="83"/>
        <end position="90"/>
    </location>
</feature>
<feature type="helix" evidence="2">
    <location>
        <begin position="96"/>
        <end position="103"/>
    </location>
</feature>
<feature type="strand" evidence="2">
    <location>
        <begin position="108"/>
        <end position="110"/>
    </location>
</feature>
<feature type="helix" evidence="2">
    <location>
        <begin position="111"/>
        <end position="119"/>
    </location>
</feature>
<feature type="strand" evidence="2">
    <location>
        <begin position="122"/>
        <end position="128"/>
    </location>
</feature>
<feature type="helix" evidence="2">
    <location>
        <begin position="133"/>
        <end position="146"/>
    </location>
</feature>
<feature type="strand" evidence="2">
    <location>
        <begin position="152"/>
        <end position="154"/>
    </location>
</feature>
<feature type="strand" evidence="2">
    <location>
        <begin position="156"/>
        <end position="159"/>
    </location>
</feature>
<feature type="turn" evidence="2">
    <location>
        <begin position="160"/>
        <end position="162"/>
    </location>
</feature>
<feature type="strand" evidence="2">
    <location>
        <begin position="163"/>
        <end position="167"/>
    </location>
</feature>
<feature type="strand" evidence="2">
    <location>
        <begin position="170"/>
        <end position="177"/>
    </location>
</feature>
<feature type="helix" evidence="2">
    <location>
        <begin position="181"/>
        <end position="187"/>
    </location>
</feature>
<feature type="strand" evidence="2">
    <location>
        <begin position="191"/>
        <end position="195"/>
    </location>
</feature>
<feature type="helix" evidence="2">
    <location>
        <begin position="210"/>
        <end position="222"/>
    </location>
</feature>
<feature type="strand" evidence="2">
    <location>
        <begin position="229"/>
        <end position="233"/>
    </location>
</feature>
<feature type="helix" evidence="2">
    <location>
        <begin position="237"/>
        <end position="242"/>
    </location>
</feature>
<feature type="helix" evidence="2">
    <location>
        <begin position="243"/>
        <end position="245"/>
    </location>
</feature>
<feature type="strand" evidence="2">
    <location>
        <begin position="250"/>
        <end position="256"/>
    </location>
</feature>
<feature type="strand" evidence="2">
    <location>
        <begin position="260"/>
        <end position="269"/>
    </location>
</feature>
<feature type="strand" evidence="2">
    <location>
        <begin position="272"/>
        <end position="279"/>
    </location>
</feature>
<feature type="strand" evidence="2">
    <location>
        <begin position="285"/>
        <end position="291"/>
    </location>
</feature>
<feature type="helix" evidence="2">
    <location>
        <begin position="294"/>
        <end position="309"/>
    </location>
</feature>
<feature type="helix" evidence="2">
    <location>
        <begin position="314"/>
        <end position="322"/>
    </location>
</feature>
<evidence type="ECO:0000255" key="1">
    <source>
        <dbReference type="HAMAP-Rule" id="MF_00046"/>
    </source>
</evidence>
<evidence type="ECO:0007829" key="2">
    <source>
        <dbReference type="PDB" id="6CAU"/>
    </source>
</evidence>
<accession>B7GV74</accession>
<protein>
    <recommendedName>
        <fullName evidence="1">UDP-N-acetylmuramate--L-alanine ligase</fullName>
        <ecNumber evidence="1">6.3.2.8</ecNumber>
    </recommendedName>
    <alternativeName>
        <fullName evidence="1">UDP-N-acetylmuramoyl-L-alanine synthetase</fullName>
    </alternativeName>
</protein>
<comment type="function">
    <text evidence="1">Cell wall formation.</text>
</comment>
<comment type="catalytic activity">
    <reaction evidence="1">
        <text>UDP-N-acetyl-alpha-D-muramate + L-alanine + ATP = UDP-N-acetyl-alpha-D-muramoyl-L-alanine + ADP + phosphate + H(+)</text>
        <dbReference type="Rhea" id="RHEA:23372"/>
        <dbReference type="ChEBI" id="CHEBI:15378"/>
        <dbReference type="ChEBI" id="CHEBI:30616"/>
        <dbReference type="ChEBI" id="CHEBI:43474"/>
        <dbReference type="ChEBI" id="CHEBI:57972"/>
        <dbReference type="ChEBI" id="CHEBI:70757"/>
        <dbReference type="ChEBI" id="CHEBI:83898"/>
        <dbReference type="ChEBI" id="CHEBI:456216"/>
        <dbReference type="EC" id="6.3.2.8"/>
    </reaction>
</comment>
<comment type="pathway">
    <text evidence="1">Cell wall biogenesis; peptidoglycan biosynthesis.</text>
</comment>
<comment type="subcellular location">
    <subcellularLocation>
        <location evidence="1">Cytoplasm</location>
    </subcellularLocation>
</comment>
<comment type="similarity">
    <text evidence="1">Belongs to the MurCDEF family.</text>
</comment>
<dbReference type="EC" id="6.3.2.8" evidence="1"/>
<dbReference type="EMBL" id="CP001172">
    <property type="protein sequence ID" value="ACJ58378.1"/>
    <property type="molecule type" value="Genomic_DNA"/>
</dbReference>
<dbReference type="RefSeq" id="WP_000075472.1">
    <property type="nucleotide sequence ID" value="NZ_CP001172.1"/>
</dbReference>
<dbReference type="PDB" id="6CAU">
    <property type="method" value="X-ray"/>
    <property type="resolution" value="2.50 A"/>
    <property type="chains" value="A=19-482"/>
</dbReference>
<dbReference type="PDBsum" id="6CAU"/>
<dbReference type="SMR" id="B7GV74"/>
<dbReference type="HOGENOM" id="CLU_028104_2_2_6"/>
<dbReference type="UniPathway" id="UPA00219"/>
<dbReference type="Proteomes" id="UP000006924">
    <property type="component" value="Chromosome"/>
</dbReference>
<dbReference type="GO" id="GO:0005737">
    <property type="term" value="C:cytoplasm"/>
    <property type="evidence" value="ECO:0007669"/>
    <property type="project" value="UniProtKB-SubCell"/>
</dbReference>
<dbReference type="GO" id="GO:0005524">
    <property type="term" value="F:ATP binding"/>
    <property type="evidence" value="ECO:0007669"/>
    <property type="project" value="UniProtKB-UniRule"/>
</dbReference>
<dbReference type="GO" id="GO:0008763">
    <property type="term" value="F:UDP-N-acetylmuramate-L-alanine ligase activity"/>
    <property type="evidence" value="ECO:0007669"/>
    <property type="project" value="UniProtKB-UniRule"/>
</dbReference>
<dbReference type="GO" id="GO:0051301">
    <property type="term" value="P:cell division"/>
    <property type="evidence" value="ECO:0007669"/>
    <property type="project" value="UniProtKB-KW"/>
</dbReference>
<dbReference type="GO" id="GO:0071555">
    <property type="term" value="P:cell wall organization"/>
    <property type="evidence" value="ECO:0007669"/>
    <property type="project" value="UniProtKB-KW"/>
</dbReference>
<dbReference type="GO" id="GO:0009252">
    <property type="term" value="P:peptidoglycan biosynthetic process"/>
    <property type="evidence" value="ECO:0007669"/>
    <property type="project" value="UniProtKB-UniRule"/>
</dbReference>
<dbReference type="GO" id="GO:0008360">
    <property type="term" value="P:regulation of cell shape"/>
    <property type="evidence" value="ECO:0007669"/>
    <property type="project" value="UniProtKB-KW"/>
</dbReference>
<dbReference type="FunFam" id="3.40.1190.10:FF:000001">
    <property type="entry name" value="UDP-N-acetylmuramate--L-alanine ligase"/>
    <property type="match status" value="1"/>
</dbReference>
<dbReference type="FunFam" id="3.40.50.720:FF:000046">
    <property type="entry name" value="UDP-N-acetylmuramate--L-alanine ligase"/>
    <property type="match status" value="1"/>
</dbReference>
<dbReference type="Gene3D" id="3.90.190.20">
    <property type="entry name" value="Mur ligase, C-terminal domain"/>
    <property type="match status" value="1"/>
</dbReference>
<dbReference type="Gene3D" id="3.40.1190.10">
    <property type="entry name" value="Mur-like, catalytic domain"/>
    <property type="match status" value="1"/>
</dbReference>
<dbReference type="Gene3D" id="3.40.50.720">
    <property type="entry name" value="NAD(P)-binding Rossmann-like Domain"/>
    <property type="match status" value="1"/>
</dbReference>
<dbReference type="HAMAP" id="MF_00046">
    <property type="entry name" value="MurC"/>
    <property type="match status" value="1"/>
</dbReference>
<dbReference type="InterPro" id="IPR036565">
    <property type="entry name" value="Mur-like_cat_sf"/>
</dbReference>
<dbReference type="InterPro" id="IPR004101">
    <property type="entry name" value="Mur_ligase_C"/>
</dbReference>
<dbReference type="InterPro" id="IPR036615">
    <property type="entry name" value="Mur_ligase_C_dom_sf"/>
</dbReference>
<dbReference type="InterPro" id="IPR013221">
    <property type="entry name" value="Mur_ligase_cen"/>
</dbReference>
<dbReference type="InterPro" id="IPR000713">
    <property type="entry name" value="Mur_ligase_N"/>
</dbReference>
<dbReference type="InterPro" id="IPR050061">
    <property type="entry name" value="MurCDEF_pg_biosynth"/>
</dbReference>
<dbReference type="InterPro" id="IPR005758">
    <property type="entry name" value="UDP-N-AcMur_Ala_ligase_MurC"/>
</dbReference>
<dbReference type="NCBIfam" id="TIGR01082">
    <property type="entry name" value="murC"/>
    <property type="match status" value="1"/>
</dbReference>
<dbReference type="PANTHER" id="PTHR43445:SF3">
    <property type="entry name" value="UDP-N-ACETYLMURAMATE--L-ALANINE LIGASE"/>
    <property type="match status" value="1"/>
</dbReference>
<dbReference type="PANTHER" id="PTHR43445">
    <property type="entry name" value="UDP-N-ACETYLMURAMATE--L-ALANINE LIGASE-RELATED"/>
    <property type="match status" value="1"/>
</dbReference>
<dbReference type="Pfam" id="PF01225">
    <property type="entry name" value="Mur_ligase"/>
    <property type="match status" value="1"/>
</dbReference>
<dbReference type="Pfam" id="PF02875">
    <property type="entry name" value="Mur_ligase_C"/>
    <property type="match status" value="1"/>
</dbReference>
<dbReference type="Pfam" id="PF08245">
    <property type="entry name" value="Mur_ligase_M"/>
    <property type="match status" value="1"/>
</dbReference>
<dbReference type="SUPFAM" id="SSF51984">
    <property type="entry name" value="MurCD N-terminal domain"/>
    <property type="match status" value="1"/>
</dbReference>
<dbReference type="SUPFAM" id="SSF53623">
    <property type="entry name" value="MurD-like peptide ligases, catalytic domain"/>
    <property type="match status" value="1"/>
</dbReference>
<dbReference type="SUPFAM" id="SSF53244">
    <property type="entry name" value="MurD-like peptide ligases, peptide-binding domain"/>
    <property type="match status" value="1"/>
</dbReference>
<reference key="1">
    <citation type="journal article" date="2008" name="J. Bacteriol.">
        <title>Comparative genome sequence analysis of multidrug-resistant Acinetobacter baumannii.</title>
        <authorList>
            <person name="Adams M.D."/>
            <person name="Goglin K."/>
            <person name="Molyneaux N."/>
            <person name="Hujer K.M."/>
            <person name="Lavender H."/>
            <person name="Jamison J.J."/>
            <person name="MacDonald I.J."/>
            <person name="Martin K.M."/>
            <person name="Russo T."/>
            <person name="Campagnari A.A."/>
            <person name="Hujer A.M."/>
            <person name="Bonomo R.A."/>
            <person name="Gill S.R."/>
        </authorList>
    </citation>
    <scope>NUCLEOTIDE SEQUENCE [LARGE SCALE GENOMIC DNA]</scope>
    <source>
        <strain>AB307-0294</strain>
    </source>
</reference>
<name>MURC_ACIB3</name>